<protein>
    <recommendedName>
        <fullName evidence="1">3-hydroxyacyl-[acyl-carrier-protein] dehydratase FabZ</fullName>
        <ecNumber evidence="1">4.2.1.59</ecNumber>
    </recommendedName>
    <alternativeName>
        <fullName evidence="1">(3R)-hydroxymyristoyl-[acyl-carrier-protein] dehydratase</fullName>
        <shortName evidence="1">(3R)-hydroxymyristoyl-ACP dehydrase</shortName>
    </alternativeName>
    <alternativeName>
        <fullName evidence="1">Beta-hydroxyacyl-ACP dehydratase</fullName>
    </alternativeName>
</protein>
<sequence length="142" mass="15860">MLNIDEIKKLIPHRYPFLLVDKITELEVGKRAVGIKNVTVNEPFFQGHFPEYPLMPGVLIVEALAQVCGVAMMSVEENKGKLGVFAGIDKVRIKREVRPGDTLTMEVEMTTLRKNIAKADAKAYVGEELVCKGELMFALVEK</sequence>
<proteinExistence type="inferred from homology"/>
<organism>
    <name type="scientific">Clostridioides difficile (strain 630)</name>
    <name type="common">Peptoclostridium difficile</name>
    <dbReference type="NCBI Taxonomy" id="272563"/>
    <lineage>
        <taxon>Bacteria</taxon>
        <taxon>Bacillati</taxon>
        <taxon>Bacillota</taxon>
        <taxon>Clostridia</taxon>
        <taxon>Peptostreptococcales</taxon>
        <taxon>Peptostreptococcaceae</taxon>
        <taxon>Clostridioides</taxon>
    </lineage>
</organism>
<accession>Q18CL9</accession>
<dbReference type="EC" id="4.2.1.59" evidence="1"/>
<dbReference type="EMBL" id="AM180355">
    <property type="protein sequence ID" value="CAJ66948.1"/>
    <property type="molecule type" value="Genomic_DNA"/>
</dbReference>
<dbReference type="RefSeq" id="WP_003420731.1">
    <property type="nucleotide sequence ID" value="NZ_JAUPES010000004.1"/>
</dbReference>
<dbReference type="RefSeq" id="YP_001086597.1">
    <property type="nucleotide sequence ID" value="NC_009089.1"/>
</dbReference>
<dbReference type="SMR" id="Q18CL9"/>
<dbReference type="STRING" id="272563.CD630_01280"/>
<dbReference type="EnsemblBacteria" id="CAJ66948">
    <property type="protein sequence ID" value="CAJ66948"/>
    <property type="gene ID" value="CD630_01280"/>
</dbReference>
<dbReference type="KEGG" id="cdf:CD630_01280"/>
<dbReference type="KEGG" id="pdc:CDIF630_00244"/>
<dbReference type="PATRIC" id="fig|272563.120.peg.140"/>
<dbReference type="eggNOG" id="COG0764">
    <property type="taxonomic scope" value="Bacteria"/>
</dbReference>
<dbReference type="OrthoDB" id="9772788at2"/>
<dbReference type="PhylomeDB" id="Q18CL9"/>
<dbReference type="BioCyc" id="PDIF272563:G12WB-232-MONOMER"/>
<dbReference type="Proteomes" id="UP000001978">
    <property type="component" value="Chromosome"/>
</dbReference>
<dbReference type="GO" id="GO:0005737">
    <property type="term" value="C:cytoplasm"/>
    <property type="evidence" value="ECO:0007669"/>
    <property type="project" value="UniProtKB-SubCell"/>
</dbReference>
<dbReference type="GO" id="GO:0016020">
    <property type="term" value="C:membrane"/>
    <property type="evidence" value="ECO:0007669"/>
    <property type="project" value="GOC"/>
</dbReference>
<dbReference type="GO" id="GO:0019171">
    <property type="term" value="F:(3R)-hydroxyacyl-[acyl-carrier-protein] dehydratase activity"/>
    <property type="evidence" value="ECO:0007669"/>
    <property type="project" value="UniProtKB-EC"/>
</dbReference>
<dbReference type="GO" id="GO:0006633">
    <property type="term" value="P:fatty acid biosynthetic process"/>
    <property type="evidence" value="ECO:0007669"/>
    <property type="project" value="UniProtKB-UniRule"/>
</dbReference>
<dbReference type="GO" id="GO:0009245">
    <property type="term" value="P:lipid A biosynthetic process"/>
    <property type="evidence" value="ECO:0007669"/>
    <property type="project" value="UniProtKB-UniRule"/>
</dbReference>
<dbReference type="CDD" id="cd01288">
    <property type="entry name" value="FabZ"/>
    <property type="match status" value="1"/>
</dbReference>
<dbReference type="FunFam" id="3.10.129.10:FF:000001">
    <property type="entry name" value="3-hydroxyacyl-[acyl-carrier-protein] dehydratase FabZ"/>
    <property type="match status" value="1"/>
</dbReference>
<dbReference type="Gene3D" id="3.10.129.10">
    <property type="entry name" value="Hotdog Thioesterase"/>
    <property type="match status" value="1"/>
</dbReference>
<dbReference type="HAMAP" id="MF_00406">
    <property type="entry name" value="FabZ"/>
    <property type="match status" value="1"/>
</dbReference>
<dbReference type="InterPro" id="IPR013114">
    <property type="entry name" value="FabA_FabZ"/>
</dbReference>
<dbReference type="InterPro" id="IPR010084">
    <property type="entry name" value="FabZ"/>
</dbReference>
<dbReference type="InterPro" id="IPR029069">
    <property type="entry name" value="HotDog_dom_sf"/>
</dbReference>
<dbReference type="NCBIfam" id="TIGR01750">
    <property type="entry name" value="fabZ"/>
    <property type="match status" value="1"/>
</dbReference>
<dbReference type="NCBIfam" id="NF000582">
    <property type="entry name" value="PRK00006.1"/>
    <property type="match status" value="1"/>
</dbReference>
<dbReference type="PANTHER" id="PTHR30272">
    <property type="entry name" value="3-HYDROXYACYL-[ACYL-CARRIER-PROTEIN] DEHYDRATASE"/>
    <property type="match status" value="1"/>
</dbReference>
<dbReference type="PANTHER" id="PTHR30272:SF1">
    <property type="entry name" value="3-HYDROXYACYL-[ACYL-CARRIER-PROTEIN] DEHYDRATASE"/>
    <property type="match status" value="1"/>
</dbReference>
<dbReference type="Pfam" id="PF07977">
    <property type="entry name" value="FabA"/>
    <property type="match status" value="1"/>
</dbReference>
<dbReference type="SUPFAM" id="SSF54637">
    <property type="entry name" value="Thioesterase/thiol ester dehydrase-isomerase"/>
    <property type="match status" value="1"/>
</dbReference>
<gene>
    <name evidence="1" type="primary">fabZ</name>
    <name type="ordered locus">CD630_01280</name>
</gene>
<keyword id="KW-0963">Cytoplasm</keyword>
<keyword id="KW-0441">Lipid A biosynthesis</keyword>
<keyword id="KW-0444">Lipid biosynthesis</keyword>
<keyword id="KW-0443">Lipid metabolism</keyword>
<keyword id="KW-0456">Lyase</keyword>
<keyword id="KW-1185">Reference proteome</keyword>
<evidence type="ECO:0000255" key="1">
    <source>
        <dbReference type="HAMAP-Rule" id="MF_00406"/>
    </source>
</evidence>
<comment type="function">
    <text evidence="1">Involved in unsaturated fatty acids biosynthesis. Catalyzes the dehydration of short chain beta-hydroxyacyl-ACPs and long chain saturated and unsaturated beta-hydroxyacyl-ACPs.</text>
</comment>
<comment type="catalytic activity">
    <reaction evidence="1">
        <text>a (3R)-hydroxyacyl-[ACP] = a (2E)-enoyl-[ACP] + H2O</text>
        <dbReference type="Rhea" id="RHEA:13097"/>
        <dbReference type="Rhea" id="RHEA-COMP:9925"/>
        <dbReference type="Rhea" id="RHEA-COMP:9945"/>
        <dbReference type="ChEBI" id="CHEBI:15377"/>
        <dbReference type="ChEBI" id="CHEBI:78784"/>
        <dbReference type="ChEBI" id="CHEBI:78827"/>
        <dbReference type="EC" id="4.2.1.59"/>
    </reaction>
</comment>
<comment type="subcellular location">
    <subcellularLocation>
        <location evidence="1">Cytoplasm</location>
    </subcellularLocation>
</comment>
<comment type="similarity">
    <text evidence="1">Belongs to the thioester dehydratase family. FabZ subfamily.</text>
</comment>
<feature type="chain" id="PRO_0000301886" description="3-hydroxyacyl-[acyl-carrier-protein] dehydratase FabZ">
    <location>
        <begin position="1"/>
        <end position="142"/>
    </location>
</feature>
<feature type="active site" evidence="1">
    <location>
        <position position="48"/>
    </location>
</feature>
<reference key="1">
    <citation type="journal article" date="2006" name="Nat. Genet.">
        <title>The multidrug-resistant human pathogen Clostridium difficile has a highly mobile, mosaic genome.</title>
        <authorList>
            <person name="Sebaihia M."/>
            <person name="Wren B.W."/>
            <person name="Mullany P."/>
            <person name="Fairweather N.F."/>
            <person name="Minton N."/>
            <person name="Stabler R."/>
            <person name="Thomson N.R."/>
            <person name="Roberts A.P."/>
            <person name="Cerdeno-Tarraga A.M."/>
            <person name="Wang H."/>
            <person name="Holden M.T.G."/>
            <person name="Wright A."/>
            <person name="Churcher C."/>
            <person name="Quail M.A."/>
            <person name="Baker S."/>
            <person name="Bason N."/>
            <person name="Brooks K."/>
            <person name="Chillingworth T."/>
            <person name="Cronin A."/>
            <person name="Davis P."/>
            <person name="Dowd L."/>
            <person name="Fraser A."/>
            <person name="Feltwell T."/>
            <person name="Hance Z."/>
            <person name="Holroyd S."/>
            <person name="Jagels K."/>
            <person name="Moule S."/>
            <person name="Mungall K."/>
            <person name="Price C."/>
            <person name="Rabbinowitsch E."/>
            <person name="Sharp S."/>
            <person name="Simmonds M."/>
            <person name="Stevens K."/>
            <person name="Unwin L."/>
            <person name="Whithead S."/>
            <person name="Dupuy B."/>
            <person name="Dougan G."/>
            <person name="Barrell B."/>
            <person name="Parkhill J."/>
        </authorList>
    </citation>
    <scope>NUCLEOTIDE SEQUENCE [LARGE SCALE GENOMIC DNA]</scope>
    <source>
        <strain>630</strain>
    </source>
</reference>
<name>FABZ_CLOD6</name>